<gene>
    <name evidence="1" type="primary">mdoD</name>
    <name evidence="1" type="synonym">opgD</name>
    <name type="ordered locus">SSON_1718</name>
</gene>
<evidence type="ECO:0000255" key="1">
    <source>
        <dbReference type="HAMAP-Rule" id="MF_01068"/>
    </source>
</evidence>
<reference key="1">
    <citation type="journal article" date="2005" name="Nucleic Acids Res.">
        <title>Genome dynamics and diversity of Shigella species, the etiologic agents of bacillary dysentery.</title>
        <authorList>
            <person name="Yang F."/>
            <person name="Yang J."/>
            <person name="Zhang X."/>
            <person name="Chen L."/>
            <person name="Jiang Y."/>
            <person name="Yan Y."/>
            <person name="Tang X."/>
            <person name="Wang J."/>
            <person name="Xiong Z."/>
            <person name="Dong J."/>
            <person name="Xue Y."/>
            <person name="Zhu Y."/>
            <person name="Xu X."/>
            <person name="Sun L."/>
            <person name="Chen S."/>
            <person name="Nie H."/>
            <person name="Peng J."/>
            <person name="Xu J."/>
            <person name="Wang Y."/>
            <person name="Yuan Z."/>
            <person name="Wen Y."/>
            <person name="Yao Z."/>
            <person name="Shen Y."/>
            <person name="Qiang B."/>
            <person name="Hou Y."/>
            <person name="Yu J."/>
            <person name="Jin Q."/>
        </authorList>
    </citation>
    <scope>NUCLEOTIDE SEQUENCE [LARGE SCALE GENOMIC DNA]</scope>
    <source>
        <strain>Ss046</strain>
    </source>
</reference>
<sequence length="551" mass="62768">MDRRRFIKGSMAMAAVCGTSGIASLFSQAAFAADSDIADGQTQRFDFSILQSMAHDLAQTAWRGAPRPLPDTLATMTPQAYNSIQYDAEKSLWHNVENRQLDAQFFHMGMGFRRRVRMFSVDPATHLAREIHFRPELFKYNDAGVDTKQLEGQSDLGFAGFRVFKAPELARRDVVSFLGASYFRAVDDTYQYGLSARGLAIDTYTDSKEEFPDFTAFWFDTVKPGATTFTVYALLDSASITGAYKFTIHCEKSQVIMDVENHLYARKDIKQLGIAPMTSMFSCGTNERRMCDTIHPQIHDSDRLSMWRGNGEWICRPLNNPQKLQFNAYTDNNPKGFGLLQLDRDFSHYQDIMGWYNKRPSLWVEPRNKWGKGTIGLMEIPTTGETLDNIVCFWQPEKAVKAGDEFAFQYRLYWSAQPPVHCPLARVMATRTGMGGFPEGWAPGEHYPEKWARRFAVDFVGGDLKAAAPKGIEPVITLSSGEAKQIEILYIEPIDGYRIQFDWYPTSDSTDPVDMRMYLRCQGDAISETWLYQYFPPAPDKRQYVDDRVMS</sequence>
<organism>
    <name type="scientific">Shigella sonnei (strain Ss046)</name>
    <dbReference type="NCBI Taxonomy" id="300269"/>
    <lineage>
        <taxon>Bacteria</taxon>
        <taxon>Pseudomonadati</taxon>
        <taxon>Pseudomonadota</taxon>
        <taxon>Gammaproteobacteria</taxon>
        <taxon>Enterobacterales</taxon>
        <taxon>Enterobacteriaceae</taxon>
        <taxon>Shigella</taxon>
    </lineage>
</organism>
<accession>Q3Z1F4</accession>
<dbReference type="EMBL" id="CP000038">
    <property type="protein sequence ID" value="AAZ88408.1"/>
    <property type="molecule type" value="Genomic_DNA"/>
</dbReference>
<dbReference type="RefSeq" id="WP_000375956.1">
    <property type="nucleotide sequence ID" value="NC_007384.1"/>
</dbReference>
<dbReference type="SMR" id="Q3Z1F4"/>
<dbReference type="GeneID" id="93775566"/>
<dbReference type="KEGG" id="ssn:SSON_1718"/>
<dbReference type="HOGENOM" id="CLU_023403_2_0_6"/>
<dbReference type="UniPathway" id="UPA00637"/>
<dbReference type="Proteomes" id="UP000002529">
    <property type="component" value="Chromosome"/>
</dbReference>
<dbReference type="GO" id="GO:0030288">
    <property type="term" value="C:outer membrane-bounded periplasmic space"/>
    <property type="evidence" value="ECO:0007669"/>
    <property type="project" value="TreeGrafter"/>
</dbReference>
<dbReference type="GO" id="GO:0030246">
    <property type="term" value="F:carbohydrate binding"/>
    <property type="evidence" value="ECO:0007669"/>
    <property type="project" value="InterPro"/>
</dbReference>
<dbReference type="GO" id="GO:0003824">
    <property type="term" value="F:catalytic activity"/>
    <property type="evidence" value="ECO:0007669"/>
    <property type="project" value="InterPro"/>
</dbReference>
<dbReference type="GO" id="GO:0051274">
    <property type="term" value="P:beta-glucan biosynthetic process"/>
    <property type="evidence" value="ECO:0007669"/>
    <property type="project" value="TreeGrafter"/>
</dbReference>
<dbReference type="FunFam" id="2.60.40.10:FF:000379">
    <property type="entry name" value="Glucans biosynthesis protein D"/>
    <property type="match status" value="1"/>
</dbReference>
<dbReference type="FunFam" id="2.70.98.10:FF:000004">
    <property type="entry name" value="Glucans biosynthesis protein D"/>
    <property type="match status" value="1"/>
</dbReference>
<dbReference type="Gene3D" id="2.70.98.10">
    <property type="match status" value="1"/>
</dbReference>
<dbReference type="Gene3D" id="2.60.40.10">
    <property type="entry name" value="Immunoglobulins"/>
    <property type="match status" value="1"/>
</dbReference>
<dbReference type="HAMAP" id="MF_01068">
    <property type="entry name" value="MdoD_OpgD"/>
    <property type="match status" value="1"/>
</dbReference>
<dbReference type="InterPro" id="IPR011013">
    <property type="entry name" value="Gal_mutarotase_sf_dom"/>
</dbReference>
<dbReference type="InterPro" id="IPR014718">
    <property type="entry name" value="GH-type_carb-bd"/>
</dbReference>
<dbReference type="InterPro" id="IPR023724">
    <property type="entry name" value="Glucan_biosyn_MdoD"/>
</dbReference>
<dbReference type="InterPro" id="IPR014438">
    <property type="entry name" value="Glucan_biosyn_MdoG/MdoD"/>
</dbReference>
<dbReference type="InterPro" id="IPR007444">
    <property type="entry name" value="Glucan_biosyn_MdoG_C"/>
</dbReference>
<dbReference type="InterPro" id="IPR013783">
    <property type="entry name" value="Ig-like_fold"/>
</dbReference>
<dbReference type="InterPro" id="IPR014756">
    <property type="entry name" value="Ig_E-set"/>
</dbReference>
<dbReference type="InterPro" id="IPR006311">
    <property type="entry name" value="TAT_signal"/>
</dbReference>
<dbReference type="InterPro" id="IPR019546">
    <property type="entry name" value="TAT_signal_bac_arc"/>
</dbReference>
<dbReference type="NCBIfam" id="TIGR01409">
    <property type="entry name" value="TAT_signal_seq"/>
    <property type="match status" value="1"/>
</dbReference>
<dbReference type="PANTHER" id="PTHR30504">
    <property type="entry name" value="GLUCANS BIOSYNTHESIS PROTEIN"/>
    <property type="match status" value="1"/>
</dbReference>
<dbReference type="PANTHER" id="PTHR30504:SF3">
    <property type="entry name" value="GLUCANS BIOSYNTHESIS PROTEIN D"/>
    <property type="match status" value="1"/>
</dbReference>
<dbReference type="Pfam" id="PF04349">
    <property type="entry name" value="MdoG"/>
    <property type="match status" value="1"/>
</dbReference>
<dbReference type="PIRSF" id="PIRSF006281">
    <property type="entry name" value="MdoG"/>
    <property type="match status" value="1"/>
</dbReference>
<dbReference type="SUPFAM" id="SSF81296">
    <property type="entry name" value="E set domains"/>
    <property type="match status" value="1"/>
</dbReference>
<dbReference type="SUPFAM" id="SSF74650">
    <property type="entry name" value="Galactose mutarotase-like"/>
    <property type="match status" value="1"/>
</dbReference>
<dbReference type="PROSITE" id="PS51318">
    <property type="entry name" value="TAT"/>
    <property type="match status" value="1"/>
</dbReference>
<comment type="function">
    <text evidence="1">Probably involved in the control of the structural glucose backbone of osmoregulated periplasmic glucans (OPGs).</text>
</comment>
<comment type="pathway">
    <text evidence="1">Glycan metabolism; osmoregulated periplasmic glucan (OPG) biosynthesis.</text>
</comment>
<comment type="subcellular location">
    <subcellularLocation>
        <location evidence="1">Periplasm</location>
    </subcellularLocation>
</comment>
<comment type="PTM">
    <text>Predicted to be exported by the Tat system. The position of the signal peptide cleavage has not been experimentally proven.</text>
</comment>
<comment type="similarity">
    <text evidence="1">Belongs to the OpgD/OpgG family.</text>
</comment>
<protein>
    <recommendedName>
        <fullName evidence="1">Glucans biosynthesis protein D</fullName>
    </recommendedName>
</protein>
<feature type="signal peptide" description="Tat-type signal" evidence="1">
    <location>
        <begin position="1"/>
        <end position="32"/>
    </location>
</feature>
<feature type="chain" id="PRO_1000064554" description="Glucans biosynthesis protein D">
    <location>
        <begin position="33"/>
        <end position="551"/>
    </location>
</feature>
<name>OPGD_SHISS</name>
<keyword id="KW-0574">Periplasm</keyword>
<keyword id="KW-1185">Reference proteome</keyword>
<keyword id="KW-0732">Signal</keyword>
<proteinExistence type="inferred from homology"/>